<evidence type="ECO:0000250" key="1"/>
<evidence type="ECO:0000255" key="2">
    <source>
        <dbReference type="PROSITE-ProRule" id="PRU01088"/>
    </source>
</evidence>
<evidence type="ECO:0000256" key="3">
    <source>
        <dbReference type="SAM" id="MobiDB-lite"/>
    </source>
</evidence>
<evidence type="ECO:0000305" key="4"/>
<evidence type="ECO:0000305" key="5">
    <source>
    </source>
</evidence>
<proteinExistence type="evidence at transcript level"/>
<sequence length="462" mass="50141">MSTGGPQKLEAQGGKEGKEWDDGAEHDGVTKIYVAAGGLGIEQIRFDYVKNGQPKEGSFHGVKGRSTISTIEISHPAEYLISMEGWYDSTNIIQGIQFKSNKHTSQYFGYEFFGDGTQFSLQVNDNKIIGFHGFADSHLNSVGAYFAPISSSLTTTPNKVEAQGGNGGETFDDGVFDHVRKVYVGQGESGVAYVKFEYEKDGKRETRDHGKMTLLGTEEFEVDSDDYITSIEVSVDKVFGYNSEIVTALVFKTSKGTTSPPFGMVTEKKFELKDGNGGKLAGFHGKASDVLYALGAYFAPSTTSTTPSTTKKLQARGGNGGASWDDGVFDGVRKILVGQGNDGVAFVTFEYNKGSQAILGDGHGKKTLLGTETFELDYPSEYITSVEGYYDKIFGVEAEVVTSLTFKTNKRTSQPFGMTAGEHFELKEDGYKVVGFHGKAGDLVHQIGVHIVPIFTNYRVAI</sequence>
<organism>
    <name type="scientific">Arabidopsis thaliana</name>
    <name type="common">Mouse-ear cress</name>
    <dbReference type="NCBI Taxonomy" id="3702"/>
    <lineage>
        <taxon>Eukaryota</taxon>
        <taxon>Viridiplantae</taxon>
        <taxon>Streptophyta</taxon>
        <taxon>Embryophyta</taxon>
        <taxon>Tracheophyta</taxon>
        <taxon>Spermatophyta</taxon>
        <taxon>Magnoliopsida</taxon>
        <taxon>eudicotyledons</taxon>
        <taxon>Gunneridae</taxon>
        <taxon>Pentapetalae</taxon>
        <taxon>rosids</taxon>
        <taxon>malvids</taxon>
        <taxon>Brassicales</taxon>
        <taxon>Brassicaceae</taxon>
        <taxon>Camelineae</taxon>
        <taxon>Arabidopsis</taxon>
    </lineage>
</organism>
<reference key="1">
    <citation type="journal article" date="2001" name="Planta">
        <title>COI1 affects myrosinase activity and controls the expression of two flower-specific myrosinase-binding protein homologues in Arabidopsis.</title>
        <authorList>
            <person name="Capella A.N."/>
            <person name="Menossi M."/>
            <person name="Arruda P."/>
            <person name="Benedetti C.E."/>
        </authorList>
    </citation>
    <scope>NUCLEOTIDE SEQUENCE [MRNA]</scope>
    <source>
        <strain>cv. Landsberg erecta</strain>
        <tissue>Flower</tissue>
    </source>
</reference>
<reference key="2">
    <citation type="journal article" date="2008" name="Plant Cell Physiol.">
        <title>Antagonistic jacalin-related lectins regulate the size of ER body-type beta-glucosidase complexes in Arabidopsis thaliana.</title>
        <authorList>
            <person name="Nagano A.J."/>
            <person name="Fukao Y."/>
            <person name="Fujiwara M."/>
            <person name="Nishimura M."/>
            <person name="Hara-Nishimura I."/>
        </authorList>
    </citation>
    <scope>GENE FAMILY</scope>
    <scope>NOMENCLATURE</scope>
</reference>
<accession>O65187</accession>
<dbReference type="EMBL" id="AF054906">
    <property type="protein sequence ID" value="AAC08601.1"/>
    <property type="molecule type" value="mRNA"/>
</dbReference>
<dbReference type="PIR" id="T52115">
    <property type="entry name" value="T52115"/>
</dbReference>
<dbReference type="SMR" id="O65187"/>
<dbReference type="ExpressionAtlas" id="O65187">
    <property type="expression patterns" value="baseline and differential"/>
</dbReference>
<dbReference type="GO" id="GO:0030246">
    <property type="term" value="F:carbohydrate binding"/>
    <property type="evidence" value="ECO:0007669"/>
    <property type="project" value="UniProtKB-KW"/>
</dbReference>
<dbReference type="CDD" id="cd09612">
    <property type="entry name" value="Jacalin"/>
    <property type="match status" value="3"/>
</dbReference>
<dbReference type="FunFam" id="2.100.10.30:FF:000001">
    <property type="entry name" value="Jacalin-related lectin 33"/>
    <property type="match status" value="3"/>
</dbReference>
<dbReference type="Gene3D" id="2.100.10.30">
    <property type="entry name" value="Jacalin-like lectin domain"/>
    <property type="match status" value="3"/>
</dbReference>
<dbReference type="InterPro" id="IPR001229">
    <property type="entry name" value="Jacalin-like_lectin_dom"/>
</dbReference>
<dbReference type="InterPro" id="IPR033734">
    <property type="entry name" value="Jacalin-like_lectin_dom_plant"/>
</dbReference>
<dbReference type="InterPro" id="IPR036404">
    <property type="entry name" value="Jacalin-like_lectin_dom_sf"/>
</dbReference>
<dbReference type="PANTHER" id="PTHR47293:SF11">
    <property type="entry name" value="JACALIN-RELATED LECTIN 12-RELATED"/>
    <property type="match status" value="1"/>
</dbReference>
<dbReference type="PANTHER" id="PTHR47293">
    <property type="entry name" value="JACALIN-RELATED LECTIN 3"/>
    <property type="match status" value="1"/>
</dbReference>
<dbReference type="Pfam" id="PF01419">
    <property type="entry name" value="Jacalin"/>
    <property type="match status" value="3"/>
</dbReference>
<dbReference type="SMART" id="SM00915">
    <property type="entry name" value="Jacalin"/>
    <property type="match status" value="3"/>
</dbReference>
<dbReference type="SUPFAM" id="SSF51101">
    <property type="entry name" value="Mannose-binding lectins"/>
    <property type="match status" value="3"/>
</dbReference>
<dbReference type="PROSITE" id="PS51752">
    <property type="entry name" value="JACALIN_LECTIN"/>
    <property type="match status" value="3"/>
</dbReference>
<gene>
    <name type="primary">MBP1</name>
    <name type="synonym">JAL7</name>
    <name type="synonym">MBP1.1</name>
</gene>
<feature type="chain" id="PRO_0000430374" description="Myrosinase-binding protein 1">
    <location>
        <begin position="1"/>
        <end position="462"/>
    </location>
</feature>
<feature type="domain" description="Jacalin-type lectin 1" evidence="2">
    <location>
        <begin position="6"/>
        <end position="148"/>
    </location>
</feature>
<feature type="domain" description="Jacalin-type lectin 2" evidence="2">
    <location>
        <begin position="157"/>
        <end position="300"/>
    </location>
</feature>
<feature type="domain" description="Jacalin-type lectin 3" evidence="2">
    <location>
        <begin position="310"/>
        <end position="453"/>
    </location>
</feature>
<feature type="region of interest" description="Disordered" evidence="3">
    <location>
        <begin position="1"/>
        <end position="23"/>
    </location>
</feature>
<feature type="compositionally biased region" description="Basic and acidic residues" evidence="3">
    <location>
        <begin position="13"/>
        <end position="23"/>
    </location>
</feature>
<keyword id="KW-0430">Lectin</keyword>
<keyword id="KW-0677">Repeat</keyword>
<comment type="tissue specificity">
    <text>Expressed exclusively in flowers, in male and female organs, petals and pedicels. Not detected in pollen grains or sepals.</text>
</comment>
<comment type="developmental stage">
    <text>Highly expressed in immature flowers, but progressively decrease as flowers mature and senesce.</text>
</comment>
<comment type="induction">
    <text evidence="1">Up-regulated by methyl jasmonate.</text>
</comment>
<comment type="similarity">
    <text evidence="2 4">Belongs to the jacalin lectin family.</text>
</comment>
<comment type="caution">
    <text evidence="5">The gene has been cloned in cv. Landsberg erecta, but the tissue specificity, developmental stage and induction have been determined in cv. Columbia (PubMed:11678272).</text>
</comment>
<protein>
    <recommendedName>
        <fullName>Myrosinase-binding protein 1</fullName>
    </recommendedName>
    <alternativeName>
        <fullName>Jacalin-related lectin 7</fullName>
    </alternativeName>
</protein>
<name>JAL7L_ARATH</name>